<protein>
    <recommendedName>
        <fullName>Ficolin-2</fullName>
    </recommendedName>
    <alternativeName>
        <fullName>Collagen/fibrinogen domain-containing protein 2</fullName>
    </alternativeName>
    <alternativeName>
        <fullName>Ficolin-B</fullName>
    </alternativeName>
    <alternativeName>
        <fullName>Ficolin-beta</fullName>
    </alternativeName>
    <alternativeName>
        <fullName>L-ficolin</fullName>
    </alternativeName>
</protein>
<reference key="1">
    <citation type="submission" date="2004-12" db="EMBL/GenBank/DDBJ databases">
        <title>Comparison of porcine and bovine ficolins expressed by neutrophils.</title>
        <authorList>
            <person name="Keirstead N.D."/>
            <person name="Brooks A.S."/>
            <person name="Lillie B.N.M."/>
            <person name="Caswell J.L."/>
            <person name="Hayes M.A."/>
        </authorList>
    </citation>
    <scope>NUCLEOTIDE SEQUENCE [MRNA]</scope>
    <source>
        <tissue>Bone marrow</tissue>
    </source>
</reference>
<feature type="signal peptide" evidence="4">
    <location>
        <begin position="1"/>
        <end position="29"/>
    </location>
</feature>
<feature type="chain" id="PRO_5000094837" description="Ficolin-2">
    <location>
        <begin position="30"/>
        <end position="329"/>
    </location>
</feature>
<feature type="domain" description="Collagen-like">
    <location>
        <begin position="52"/>
        <end position="111"/>
    </location>
</feature>
<feature type="domain" description="Fibrinogen C-terminal" evidence="5">
    <location>
        <begin position="112"/>
        <end position="329"/>
    </location>
</feature>
<feature type="region of interest" description="Disordered" evidence="6">
    <location>
        <begin position="64"/>
        <end position="113"/>
    </location>
</feature>
<feature type="compositionally biased region" description="Low complexity" evidence="6">
    <location>
        <begin position="77"/>
        <end position="90"/>
    </location>
</feature>
<feature type="binding site" evidence="2">
    <location>
        <position position="265"/>
    </location>
    <ligand>
        <name>Ca(2+)</name>
        <dbReference type="ChEBI" id="CHEBI:29108"/>
    </ligand>
</feature>
<feature type="binding site" evidence="2">
    <location>
        <position position="267"/>
    </location>
    <ligand>
        <name>Ca(2+)</name>
        <dbReference type="ChEBI" id="CHEBI:29108"/>
    </ligand>
</feature>
<feature type="binding site" evidence="2">
    <location>
        <position position="269"/>
    </location>
    <ligand>
        <name>Ca(2+)</name>
        <dbReference type="ChEBI" id="CHEBI:29108"/>
    </ligand>
</feature>
<feature type="binding site" evidence="2">
    <location>
        <position position="271"/>
    </location>
    <ligand>
        <name>Ca(2+)</name>
        <dbReference type="ChEBI" id="CHEBI:29108"/>
    </ligand>
</feature>
<feature type="glycosylation site" description="N-linked (GlcNAc...) asparagine" evidence="4">
    <location>
        <position position="316"/>
    </location>
</feature>
<feature type="disulfide bond" evidence="2">
    <location>
        <begin position="114"/>
        <end position="142"/>
    </location>
</feature>
<feature type="disulfide bond" evidence="2">
    <location>
        <begin position="121"/>
        <end position="149"/>
    </location>
</feature>
<feature type="disulfide bond" evidence="2">
    <location>
        <begin position="273"/>
        <end position="286"/>
    </location>
</feature>
<sequence length="329" mass="35339">MELGGAAGALGPSGPLLVCLCFGTLAAQAADTCPEVKLVGLEGSDKLSILRGCPGLPGAPGLKGETGAAGLKGERGLPGVPGKAGPAGPKGSTGAQGEKGARGEKGESGQLHSCATGPRTCTELLTRGHFLSGWHTIYLPDCRPLTVLCDMDTDGGGWTVFQRRKDGSVDFFRTWTAYKQGFGSQLGEFWLGNDNIHALTAQGTSELRVDLMDFEGNHRFAKYQSFRMADEAEKYKLVLGAFVEGNAGDSLTDHGNHFFSTKDRDNDESPSNCAAQFQGAWWYHSCHSSNLNGRYLRGPHTSYANGINWKSWGRYNYSYKVSEMKLRLT</sequence>
<proteinExistence type="evidence at transcript level"/>
<comment type="function">
    <text evidence="3">May function in innate immunity through activation of the lectin complement pathway. Calcium-dependent and GlcNAc-binding lectin (By similarity).</text>
</comment>
<comment type="subunit">
    <text evidence="3">Homotrimer. Interacts with elastin. Interacts with MASP1 and MASP2.</text>
</comment>
<comment type="subcellular location">
    <subcellularLocation>
        <location evidence="1">Secreted</location>
    </subcellularLocation>
</comment>
<comment type="domain">
    <text evidence="3">The fibrinogen-like domain (FBG) contains calcium-binding sites that may be involved in carbohydrate binding.</text>
</comment>
<comment type="similarity">
    <text evidence="7">Belongs to the ficolin lectin family.</text>
</comment>
<accession>Q5I2E5</accession>
<gene>
    <name type="primary">FCN2</name>
</gene>
<keyword id="KW-0106">Calcium</keyword>
<keyword id="KW-0176">Collagen</keyword>
<keyword id="KW-1018">Complement activation lectin pathway</keyword>
<keyword id="KW-1015">Disulfide bond</keyword>
<keyword id="KW-0325">Glycoprotein</keyword>
<keyword id="KW-0391">Immunity</keyword>
<keyword id="KW-0399">Innate immunity</keyword>
<keyword id="KW-0430">Lectin</keyword>
<keyword id="KW-0479">Metal-binding</keyword>
<keyword id="KW-1185">Reference proteome</keyword>
<keyword id="KW-0677">Repeat</keyword>
<keyword id="KW-0964">Secreted</keyword>
<keyword id="KW-0732">Signal</keyword>
<name>FCN2_BOVIN</name>
<dbReference type="EMBL" id="AY860499">
    <property type="protein sequence ID" value="AAW52550.1"/>
    <property type="molecule type" value="mRNA"/>
</dbReference>
<dbReference type="RefSeq" id="NP_001010996.1">
    <property type="nucleotide sequence ID" value="NM_001010996.1"/>
</dbReference>
<dbReference type="SMR" id="Q5I2E5"/>
<dbReference type="FunCoup" id="Q5I2E5">
    <property type="interactions" value="86"/>
</dbReference>
<dbReference type="GlyCosmos" id="Q5I2E5">
    <property type="glycosylation" value="1 site, No reported glycans"/>
</dbReference>
<dbReference type="GlyGen" id="Q5I2E5">
    <property type="glycosylation" value="1 site"/>
</dbReference>
<dbReference type="GeneID" id="497016"/>
<dbReference type="KEGG" id="bta:497016"/>
<dbReference type="CTD" id="2219"/>
<dbReference type="VEuPathDB" id="HostDB:ENSBTAG00000048155"/>
<dbReference type="HOGENOM" id="CLU_038628_3_3_1"/>
<dbReference type="InParanoid" id="Q5I2E5"/>
<dbReference type="OrthoDB" id="7735550at2759"/>
<dbReference type="Reactome" id="R-BTA-166662">
    <property type="pathway name" value="Lectin pathway of complement activation"/>
</dbReference>
<dbReference type="Reactome" id="R-BTA-166663">
    <property type="pathway name" value="Initial triggering of complement"/>
</dbReference>
<dbReference type="Reactome" id="R-BTA-2855086">
    <property type="pathway name" value="Ficolins bind to repetitive carbohydrate structures on the target cell surface"/>
</dbReference>
<dbReference type="Reactome" id="R-BTA-6798695">
    <property type="pathway name" value="Neutrophil degranulation"/>
</dbReference>
<dbReference type="Proteomes" id="UP000009136">
    <property type="component" value="Chromosome 11"/>
</dbReference>
<dbReference type="Bgee" id="ENSBTAG00000048155">
    <property type="expression patterns" value="Expressed in monocyte and 92 other cell types or tissues"/>
</dbReference>
<dbReference type="GO" id="GO:0005581">
    <property type="term" value="C:collagen trimer"/>
    <property type="evidence" value="ECO:0007669"/>
    <property type="project" value="UniProtKB-KW"/>
</dbReference>
<dbReference type="GO" id="GO:0062023">
    <property type="term" value="C:collagen-containing extracellular matrix"/>
    <property type="evidence" value="ECO:0000318"/>
    <property type="project" value="GO_Central"/>
</dbReference>
<dbReference type="GO" id="GO:0005615">
    <property type="term" value="C:extracellular space"/>
    <property type="evidence" value="ECO:0000318"/>
    <property type="project" value="GO_Central"/>
</dbReference>
<dbReference type="GO" id="GO:0003823">
    <property type="term" value="F:antigen binding"/>
    <property type="evidence" value="ECO:0000318"/>
    <property type="project" value="GO_Central"/>
</dbReference>
<dbReference type="GO" id="GO:0030246">
    <property type="term" value="F:carbohydrate binding"/>
    <property type="evidence" value="ECO:0007669"/>
    <property type="project" value="UniProtKB-KW"/>
</dbReference>
<dbReference type="GO" id="GO:0097367">
    <property type="term" value="F:carbohydrate derivative binding"/>
    <property type="evidence" value="ECO:0000318"/>
    <property type="project" value="GO_Central"/>
</dbReference>
<dbReference type="GO" id="GO:0046872">
    <property type="term" value="F:metal ion binding"/>
    <property type="evidence" value="ECO:0007669"/>
    <property type="project" value="UniProtKB-KW"/>
</dbReference>
<dbReference type="GO" id="GO:0005102">
    <property type="term" value="F:signaling receptor binding"/>
    <property type="evidence" value="ECO:0000318"/>
    <property type="project" value="GO_Central"/>
</dbReference>
<dbReference type="GO" id="GO:0001867">
    <property type="term" value="P:complement activation, lectin pathway"/>
    <property type="evidence" value="ECO:0000318"/>
    <property type="project" value="GO_Central"/>
</dbReference>
<dbReference type="CDD" id="cd00087">
    <property type="entry name" value="FReD"/>
    <property type="match status" value="1"/>
</dbReference>
<dbReference type="FunFam" id="3.90.215.10:FF:000001">
    <property type="entry name" value="Tenascin isoform 1"/>
    <property type="match status" value="1"/>
</dbReference>
<dbReference type="Gene3D" id="3.90.215.10">
    <property type="entry name" value="Gamma Fibrinogen, chain A, domain 1"/>
    <property type="match status" value="1"/>
</dbReference>
<dbReference type="InterPro" id="IPR008160">
    <property type="entry name" value="Collagen"/>
</dbReference>
<dbReference type="InterPro" id="IPR036056">
    <property type="entry name" value="Fibrinogen-like_C"/>
</dbReference>
<dbReference type="InterPro" id="IPR014716">
    <property type="entry name" value="Fibrinogen_a/b/g_C_1"/>
</dbReference>
<dbReference type="InterPro" id="IPR002181">
    <property type="entry name" value="Fibrinogen_a/b/g_C_dom"/>
</dbReference>
<dbReference type="InterPro" id="IPR050373">
    <property type="entry name" value="Fibrinogen_C-term_domain"/>
</dbReference>
<dbReference type="InterPro" id="IPR020837">
    <property type="entry name" value="Fibrinogen_CS"/>
</dbReference>
<dbReference type="NCBIfam" id="NF040941">
    <property type="entry name" value="GGGWT_bact"/>
    <property type="match status" value="1"/>
</dbReference>
<dbReference type="PANTHER" id="PTHR19143">
    <property type="entry name" value="FIBRINOGEN/TENASCIN/ANGIOPOEITIN"/>
    <property type="match status" value="1"/>
</dbReference>
<dbReference type="PANTHER" id="PTHR19143:SF433">
    <property type="entry name" value="FICOLIN-2"/>
    <property type="match status" value="1"/>
</dbReference>
<dbReference type="Pfam" id="PF01391">
    <property type="entry name" value="Collagen"/>
    <property type="match status" value="1"/>
</dbReference>
<dbReference type="Pfam" id="PF00147">
    <property type="entry name" value="Fibrinogen_C"/>
    <property type="match status" value="1"/>
</dbReference>
<dbReference type="SMART" id="SM00186">
    <property type="entry name" value="FBG"/>
    <property type="match status" value="1"/>
</dbReference>
<dbReference type="SUPFAM" id="SSF56496">
    <property type="entry name" value="Fibrinogen C-terminal domain-like"/>
    <property type="match status" value="1"/>
</dbReference>
<dbReference type="PROSITE" id="PS00514">
    <property type="entry name" value="FIBRINOGEN_C_1"/>
    <property type="match status" value="1"/>
</dbReference>
<dbReference type="PROSITE" id="PS51406">
    <property type="entry name" value="FIBRINOGEN_C_2"/>
    <property type="match status" value="1"/>
</dbReference>
<organism>
    <name type="scientific">Bos taurus</name>
    <name type="common">Bovine</name>
    <dbReference type="NCBI Taxonomy" id="9913"/>
    <lineage>
        <taxon>Eukaryota</taxon>
        <taxon>Metazoa</taxon>
        <taxon>Chordata</taxon>
        <taxon>Craniata</taxon>
        <taxon>Vertebrata</taxon>
        <taxon>Euteleostomi</taxon>
        <taxon>Mammalia</taxon>
        <taxon>Eutheria</taxon>
        <taxon>Laurasiatheria</taxon>
        <taxon>Artiodactyla</taxon>
        <taxon>Ruminantia</taxon>
        <taxon>Pecora</taxon>
        <taxon>Bovidae</taxon>
        <taxon>Bovinae</taxon>
        <taxon>Bos</taxon>
    </lineage>
</organism>
<evidence type="ECO:0000250" key="1"/>
<evidence type="ECO:0000250" key="2">
    <source>
        <dbReference type="UniProtKB" id="O00602"/>
    </source>
</evidence>
<evidence type="ECO:0000250" key="3">
    <source>
        <dbReference type="UniProtKB" id="Q15485"/>
    </source>
</evidence>
<evidence type="ECO:0000255" key="4"/>
<evidence type="ECO:0000255" key="5">
    <source>
        <dbReference type="PROSITE-ProRule" id="PRU00739"/>
    </source>
</evidence>
<evidence type="ECO:0000256" key="6">
    <source>
        <dbReference type="SAM" id="MobiDB-lite"/>
    </source>
</evidence>
<evidence type="ECO:0000305" key="7"/>